<gene>
    <name evidence="1" type="primary">rpsS</name>
    <name type="ordered locus">OEOE_0599</name>
</gene>
<comment type="function">
    <text evidence="1">Protein S19 forms a complex with S13 that binds strongly to the 16S ribosomal RNA.</text>
</comment>
<comment type="similarity">
    <text evidence="1">Belongs to the universal ribosomal protein uS19 family.</text>
</comment>
<dbReference type="EMBL" id="CP000411">
    <property type="protein sequence ID" value="ABJ56541.1"/>
    <property type="molecule type" value="Genomic_DNA"/>
</dbReference>
<dbReference type="RefSeq" id="WP_002818458.1">
    <property type="nucleotide sequence ID" value="NC_008528.1"/>
</dbReference>
<dbReference type="SMR" id="Q04G81"/>
<dbReference type="STRING" id="203123.OEOE_0599"/>
<dbReference type="GeneID" id="75065421"/>
<dbReference type="KEGG" id="ooe:OEOE_0599"/>
<dbReference type="eggNOG" id="COG0185">
    <property type="taxonomic scope" value="Bacteria"/>
</dbReference>
<dbReference type="HOGENOM" id="CLU_144911_0_1_9"/>
<dbReference type="Proteomes" id="UP000000774">
    <property type="component" value="Chromosome"/>
</dbReference>
<dbReference type="GO" id="GO:0005737">
    <property type="term" value="C:cytoplasm"/>
    <property type="evidence" value="ECO:0007669"/>
    <property type="project" value="UniProtKB-ARBA"/>
</dbReference>
<dbReference type="GO" id="GO:0015935">
    <property type="term" value="C:small ribosomal subunit"/>
    <property type="evidence" value="ECO:0007669"/>
    <property type="project" value="InterPro"/>
</dbReference>
<dbReference type="GO" id="GO:0019843">
    <property type="term" value="F:rRNA binding"/>
    <property type="evidence" value="ECO:0007669"/>
    <property type="project" value="UniProtKB-UniRule"/>
</dbReference>
<dbReference type="GO" id="GO:0003735">
    <property type="term" value="F:structural constituent of ribosome"/>
    <property type="evidence" value="ECO:0007669"/>
    <property type="project" value="InterPro"/>
</dbReference>
<dbReference type="GO" id="GO:0000028">
    <property type="term" value="P:ribosomal small subunit assembly"/>
    <property type="evidence" value="ECO:0007669"/>
    <property type="project" value="TreeGrafter"/>
</dbReference>
<dbReference type="GO" id="GO:0006412">
    <property type="term" value="P:translation"/>
    <property type="evidence" value="ECO:0007669"/>
    <property type="project" value="UniProtKB-UniRule"/>
</dbReference>
<dbReference type="FunFam" id="3.30.860.10:FF:000001">
    <property type="entry name" value="30S ribosomal protein S19"/>
    <property type="match status" value="1"/>
</dbReference>
<dbReference type="Gene3D" id="3.30.860.10">
    <property type="entry name" value="30s Ribosomal Protein S19, Chain A"/>
    <property type="match status" value="1"/>
</dbReference>
<dbReference type="HAMAP" id="MF_00531">
    <property type="entry name" value="Ribosomal_uS19"/>
    <property type="match status" value="1"/>
</dbReference>
<dbReference type="InterPro" id="IPR002222">
    <property type="entry name" value="Ribosomal_uS19"/>
</dbReference>
<dbReference type="InterPro" id="IPR005732">
    <property type="entry name" value="Ribosomal_uS19_bac-type"/>
</dbReference>
<dbReference type="InterPro" id="IPR020934">
    <property type="entry name" value="Ribosomal_uS19_CS"/>
</dbReference>
<dbReference type="InterPro" id="IPR023575">
    <property type="entry name" value="Ribosomal_uS19_SF"/>
</dbReference>
<dbReference type="NCBIfam" id="TIGR01050">
    <property type="entry name" value="rpsS_bact"/>
    <property type="match status" value="1"/>
</dbReference>
<dbReference type="PANTHER" id="PTHR11880">
    <property type="entry name" value="RIBOSOMAL PROTEIN S19P FAMILY MEMBER"/>
    <property type="match status" value="1"/>
</dbReference>
<dbReference type="PANTHER" id="PTHR11880:SF8">
    <property type="entry name" value="SMALL RIBOSOMAL SUBUNIT PROTEIN US19M"/>
    <property type="match status" value="1"/>
</dbReference>
<dbReference type="Pfam" id="PF00203">
    <property type="entry name" value="Ribosomal_S19"/>
    <property type="match status" value="1"/>
</dbReference>
<dbReference type="PIRSF" id="PIRSF002144">
    <property type="entry name" value="Ribosomal_S19"/>
    <property type="match status" value="1"/>
</dbReference>
<dbReference type="PRINTS" id="PR00975">
    <property type="entry name" value="RIBOSOMALS19"/>
</dbReference>
<dbReference type="SUPFAM" id="SSF54570">
    <property type="entry name" value="Ribosomal protein S19"/>
    <property type="match status" value="1"/>
</dbReference>
<dbReference type="PROSITE" id="PS00323">
    <property type="entry name" value="RIBOSOMAL_S19"/>
    <property type="match status" value="1"/>
</dbReference>
<organism>
    <name type="scientific">Oenococcus oeni (strain ATCC BAA-331 / PSU-1)</name>
    <dbReference type="NCBI Taxonomy" id="203123"/>
    <lineage>
        <taxon>Bacteria</taxon>
        <taxon>Bacillati</taxon>
        <taxon>Bacillota</taxon>
        <taxon>Bacilli</taxon>
        <taxon>Lactobacillales</taxon>
        <taxon>Lactobacillaceae</taxon>
        <taxon>Oenococcus</taxon>
    </lineage>
</organism>
<evidence type="ECO:0000255" key="1">
    <source>
        <dbReference type="HAMAP-Rule" id="MF_00531"/>
    </source>
</evidence>
<evidence type="ECO:0000305" key="2"/>
<proteinExistence type="inferred from homology"/>
<name>RS19_OENOB</name>
<protein>
    <recommendedName>
        <fullName evidence="1">Small ribosomal subunit protein uS19</fullName>
    </recommendedName>
    <alternativeName>
        <fullName evidence="2">30S ribosomal protein S19</fullName>
    </alternativeName>
</protein>
<reference key="1">
    <citation type="journal article" date="2006" name="Proc. Natl. Acad. Sci. U.S.A.">
        <title>Comparative genomics of the lactic acid bacteria.</title>
        <authorList>
            <person name="Makarova K.S."/>
            <person name="Slesarev A."/>
            <person name="Wolf Y.I."/>
            <person name="Sorokin A."/>
            <person name="Mirkin B."/>
            <person name="Koonin E.V."/>
            <person name="Pavlov A."/>
            <person name="Pavlova N."/>
            <person name="Karamychev V."/>
            <person name="Polouchine N."/>
            <person name="Shakhova V."/>
            <person name="Grigoriev I."/>
            <person name="Lou Y."/>
            <person name="Rohksar D."/>
            <person name="Lucas S."/>
            <person name="Huang K."/>
            <person name="Goodstein D.M."/>
            <person name="Hawkins T."/>
            <person name="Plengvidhya V."/>
            <person name="Welker D."/>
            <person name="Hughes J."/>
            <person name="Goh Y."/>
            <person name="Benson A."/>
            <person name="Baldwin K."/>
            <person name="Lee J.-H."/>
            <person name="Diaz-Muniz I."/>
            <person name="Dosti B."/>
            <person name="Smeianov V."/>
            <person name="Wechter W."/>
            <person name="Barabote R."/>
            <person name="Lorca G."/>
            <person name="Altermann E."/>
            <person name="Barrangou R."/>
            <person name="Ganesan B."/>
            <person name="Xie Y."/>
            <person name="Rawsthorne H."/>
            <person name="Tamir D."/>
            <person name="Parker C."/>
            <person name="Breidt F."/>
            <person name="Broadbent J.R."/>
            <person name="Hutkins R."/>
            <person name="O'Sullivan D."/>
            <person name="Steele J."/>
            <person name="Unlu G."/>
            <person name="Saier M.H. Jr."/>
            <person name="Klaenhammer T."/>
            <person name="Richardson P."/>
            <person name="Kozyavkin S."/>
            <person name="Weimer B.C."/>
            <person name="Mills D.A."/>
        </authorList>
    </citation>
    <scope>NUCLEOTIDE SEQUENCE [LARGE SCALE GENOMIC DNA]</scope>
    <source>
        <strain>ATCC BAA-331 / PSU-1</strain>
    </source>
</reference>
<sequence>MSRSLKKGPFADPSLLKKIEQLKGQSKKPVIRTWSRRSTIFPSFIGFTIAVYDGRKHVPVYIQDDMVGHKLGEFVPTRTFRGHAGSDDKKTGK</sequence>
<feature type="chain" id="PRO_1000051090" description="Small ribosomal subunit protein uS19">
    <location>
        <begin position="1"/>
        <end position="93"/>
    </location>
</feature>
<accession>Q04G81</accession>
<keyword id="KW-1185">Reference proteome</keyword>
<keyword id="KW-0687">Ribonucleoprotein</keyword>
<keyword id="KW-0689">Ribosomal protein</keyword>
<keyword id="KW-0694">RNA-binding</keyword>
<keyword id="KW-0699">rRNA-binding</keyword>